<gene>
    <name evidence="1" type="primary">rhlB</name>
    <name type="ordered locus">CGSHiEE_07565</name>
</gene>
<organism>
    <name type="scientific">Haemophilus influenzae (strain PittEE)</name>
    <dbReference type="NCBI Taxonomy" id="374930"/>
    <lineage>
        <taxon>Bacteria</taxon>
        <taxon>Pseudomonadati</taxon>
        <taxon>Pseudomonadota</taxon>
        <taxon>Gammaproteobacteria</taxon>
        <taxon>Pasteurellales</taxon>
        <taxon>Pasteurellaceae</taxon>
        <taxon>Haemophilus</taxon>
    </lineage>
</organism>
<protein>
    <recommendedName>
        <fullName evidence="1">ATP-dependent RNA helicase RhlB</fullName>
        <ecNumber evidence="1">3.6.4.13</ecNumber>
    </recommendedName>
</protein>
<reference key="1">
    <citation type="journal article" date="2007" name="Genome Biol.">
        <title>Characterization and modeling of the Haemophilus influenzae core and supragenomes based on the complete genomic sequences of Rd and 12 clinical nontypeable strains.</title>
        <authorList>
            <person name="Hogg J.S."/>
            <person name="Hu F.Z."/>
            <person name="Janto B."/>
            <person name="Boissy R."/>
            <person name="Hayes J."/>
            <person name="Keefe R."/>
            <person name="Post J.C."/>
            <person name="Ehrlich G.D."/>
        </authorList>
    </citation>
    <scope>NUCLEOTIDE SEQUENCE [LARGE SCALE GENOMIC DNA]</scope>
    <source>
        <strain>PittEE</strain>
    </source>
</reference>
<comment type="function">
    <text evidence="1">DEAD-box RNA helicase involved in RNA degradation. Has RNA-dependent ATPase activity and unwinds double-stranded RNA.</text>
</comment>
<comment type="catalytic activity">
    <reaction evidence="1">
        <text>ATP + H2O = ADP + phosphate + H(+)</text>
        <dbReference type="Rhea" id="RHEA:13065"/>
        <dbReference type="ChEBI" id="CHEBI:15377"/>
        <dbReference type="ChEBI" id="CHEBI:15378"/>
        <dbReference type="ChEBI" id="CHEBI:30616"/>
        <dbReference type="ChEBI" id="CHEBI:43474"/>
        <dbReference type="ChEBI" id="CHEBI:456216"/>
        <dbReference type="EC" id="3.6.4.13"/>
    </reaction>
</comment>
<comment type="subunit">
    <text evidence="1">Component of the RNA degradosome, which is a multiprotein complex involved in RNA processing and mRNA degradation.</text>
</comment>
<comment type="subcellular location">
    <subcellularLocation>
        <location evidence="1">Cytoplasm</location>
    </subcellularLocation>
</comment>
<comment type="similarity">
    <text evidence="1">Belongs to the DEAD box helicase family. RhlB subfamily.</text>
</comment>
<name>RHLB_HAEIE</name>
<proteinExistence type="inferred from homology"/>
<keyword id="KW-0067">ATP-binding</keyword>
<keyword id="KW-0963">Cytoplasm</keyword>
<keyword id="KW-0347">Helicase</keyword>
<keyword id="KW-0378">Hydrolase</keyword>
<keyword id="KW-0547">Nucleotide-binding</keyword>
<keyword id="KW-0694">RNA-binding</keyword>
<evidence type="ECO:0000255" key="1">
    <source>
        <dbReference type="HAMAP-Rule" id="MF_00661"/>
    </source>
</evidence>
<sequence length="415" mass="46862">MQQDYLSQQRFSDLSLHPIVRDTLAKKGFDFCTPIQALSLPISLNGRDVAGQAQTGTGKTMAFLTATFHHLLTHQDPNLEYPHPRALILASTRELAVQISNDAEFLAKACGLKTALAYGGDGYDKQLQAIERGVDILIGTTGRVIDYVKQGVIGLDEIQVVVLDEADRMFDLGFIRDIRYLLRKCPTPQVRLTMLFSATLSYKVRELAFEDMNDPEYIEIEPEQKTGHRIKEELFYPSNQDKMALLLTLMEDEWPERCIVFANTKHRCEEIWGYLAADGHRVGLLTGDVAQKKRLSLLKQFTDGDLDILVATDVAARGLHISDVTHVFNYDLPDDREDYVHRIGRTGRAGESGVSISFACEEYAMNLPAIEEYIGHSIPVSQYETEALLELPKPYRLKRAVPPQGHTRHRSYHTK</sequence>
<accession>A5UDI1</accession>
<dbReference type="EC" id="3.6.4.13" evidence="1"/>
<dbReference type="EMBL" id="CP000671">
    <property type="protein sequence ID" value="ABQ98832.1"/>
    <property type="molecule type" value="Genomic_DNA"/>
</dbReference>
<dbReference type="SMR" id="A5UDI1"/>
<dbReference type="KEGG" id="hip:CGSHiEE_07565"/>
<dbReference type="HOGENOM" id="CLU_003041_1_3_6"/>
<dbReference type="GO" id="GO:0005829">
    <property type="term" value="C:cytosol"/>
    <property type="evidence" value="ECO:0007669"/>
    <property type="project" value="TreeGrafter"/>
</dbReference>
<dbReference type="GO" id="GO:0005524">
    <property type="term" value="F:ATP binding"/>
    <property type="evidence" value="ECO:0007669"/>
    <property type="project" value="UniProtKB-UniRule"/>
</dbReference>
<dbReference type="GO" id="GO:0016887">
    <property type="term" value="F:ATP hydrolysis activity"/>
    <property type="evidence" value="ECO:0007669"/>
    <property type="project" value="RHEA"/>
</dbReference>
<dbReference type="GO" id="GO:0003723">
    <property type="term" value="F:RNA binding"/>
    <property type="evidence" value="ECO:0007669"/>
    <property type="project" value="UniProtKB-UniRule"/>
</dbReference>
<dbReference type="GO" id="GO:0003724">
    <property type="term" value="F:RNA helicase activity"/>
    <property type="evidence" value="ECO:0007669"/>
    <property type="project" value="UniProtKB-UniRule"/>
</dbReference>
<dbReference type="GO" id="GO:0006401">
    <property type="term" value="P:RNA catabolic process"/>
    <property type="evidence" value="ECO:0007669"/>
    <property type="project" value="UniProtKB-UniRule"/>
</dbReference>
<dbReference type="CDD" id="cd00268">
    <property type="entry name" value="DEADc"/>
    <property type="match status" value="1"/>
</dbReference>
<dbReference type="CDD" id="cd18787">
    <property type="entry name" value="SF2_C_DEAD"/>
    <property type="match status" value="1"/>
</dbReference>
<dbReference type="FunFam" id="3.40.50.300:FF:000312">
    <property type="entry name" value="ATP-dependent RNA helicase RhlB"/>
    <property type="match status" value="1"/>
</dbReference>
<dbReference type="Gene3D" id="3.40.50.300">
    <property type="entry name" value="P-loop containing nucleotide triphosphate hydrolases"/>
    <property type="match status" value="2"/>
</dbReference>
<dbReference type="HAMAP" id="MF_00661">
    <property type="entry name" value="DEAD_helicase_RhlB"/>
    <property type="match status" value="1"/>
</dbReference>
<dbReference type="InterPro" id="IPR011545">
    <property type="entry name" value="DEAD/DEAH_box_helicase_dom"/>
</dbReference>
<dbReference type="InterPro" id="IPR050079">
    <property type="entry name" value="DEAD_box_RNA_helicase"/>
</dbReference>
<dbReference type="InterPro" id="IPR014001">
    <property type="entry name" value="Helicase_ATP-bd"/>
</dbReference>
<dbReference type="InterPro" id="IPR001650">
    <property type="entry name" value="Helicase_C-like"/>
</dbReference>
<dbReference type="InterPro" id="IPR027417">
    <property type="entry name" value="P-loop_NTPase"/>
</dbReference>
<dbReference type="InterPro" id="IPR000629">
    <property type="entry name" value="RNA-helicase_DEAD-box_CS"/>
</dbReference>
<dbReference type="InterPro" id="IPR023554">
    <property type="entry name" value="RNA_helicase_ATP-dep_RhlB"/>
</dbReference>
<dbReference type="InterPro" id="IPR014014">
    <property type="entry name" value="RNA_helicase_DEAD_Q_motif"/>
</dbReference>
<dbReference type="NCBIfam" id="NF003419">
    <property type="entry name" value="PRK04837.1"/>
    <property type="match status" value="1"/>
</dbReference>
<dbReference type="PANTHER" id="PTHR47959:SF10">
    <property type="entry name" value="ATP-DEPENDENT RNA HELICASE RHLB"/>
    <property type="match status" value="1"/>
</dbReference>
<dbReference type="PANTHER" id="PTHR47959">
    <property type="entry name" value="ATP-DEPENDENT RNA HELICASE RHLE-RELATED"/>
    <property type="match status" value="1"/>
</dbReference>
<dbReference type="Pfam" id="PF00270">
    <property type="entry name" value="DEAD"/>
    <property type="match status" value="1"/>
</dbReference>
<dbReference type="Pfam" id="PF00271">
    <property type="entry name" value="Helicase_C"/>
    <property type="match status" value="1"/>
</dbReference>
<dbReference type="SMART" id="SM00487">
    <property type="entry name" value="DEXDc"/>
    <property type="match status" value="1"/>
</dbReference>
<dbReference type="SMART" id="SM00490">
    <property type="entry name" value="HELICc"/>
    <property type="match status" value="1"/>
</dbReference>
<dbReference type="SUPFAM" id="SSF52540">
    <property type="entry name" value="P-loop containing nucleoside triphosphate hydrolases"/>
    <property type="match status" value="1"/>
</dbReference>
<dbReference type="PROSITE" id="PS00039">
    <property type="entry name" value="DEAD_ATP_HELICASE"/>
    <property type="match status" value="1"/>
</dbReference>
<dbReference type="PROSITE" id="PS51192">
    <property type="entry name" value="HELICASE_ATP_BIND_1"/>
    <property type="match status" value="1"/>
</dbReference>
<dbReference type="PROSITE" id="PS51194">
    <property type="entry name" value="HELICASE_CTER"/>
    <property type="match status" value="1"/>
</dbReference>
<dbReference type="PROSITE" id="PS51195">
    <property type="entry name" value="Q_MOTIF"/>
    <property type="match status" value="1"/>
</dbReference>
<feature type="chain" id="PRO_1000082845" description="ATP-dependent RNA helicase RhlB">
    <location>
        <begin position="1"/>
        <end position="415"/>
    </location>
</feature>
<feature type="domain" description="Helicase ATP-binding" evidence="1">
    <location>
        <begin position="40"/>
        <end position="218"/>
    </location>
</feature>
<feature type="domain" description="Helicase C-terminal" evidence="1">
    <location>
        <begin position="241"/>
        <end position="389"/>
    </location>
</feature>
<feature type="short sequence motif" description="Q motif">
    <location>
        <begin position="9"/>
        <end position="37"/>
    </location>
</feature>
<feature type="short sequence motif" description="DEAD box">
    <location>
        <begin position="164"/>
        <end position="167"/>
    </location>
</feature>
<feature type="binding site" evidence="1">
    <location>
        <begin position="53"/>
        <end position="60"/>
    </location>
    <ligand>
        <name>ATP</name>
        <dbReference type="ChEBI" id="CHEBI:30616"/>
    </ligand>
</feature>